<sequence length="13" mass="1407">LLPLVGNLLNDLL</sequence>
<feature type="peptide" id="PRO_0000457090" description="Temporin-AV">
    <location>
        <begin position="1"/>
        <end position="13"/>
    </location>
</feature>
<feature type="modified residue" description="Leucine amide" evidence="2">
    <location>
        <position position="13"/>
    </location>
</feature>
<feature type="unsure residue" description="L or I" evidence="2">
    <location>
        <position position="4"/>
    </location>
</feature>
<feature type="unsure residue" description="L or I" evidence="2">
    <location>
        <position position="8"/>
    </location>
</feature>
<feature type="unsure residue" description="L or I" evidence="2">
    <location>
        <position position="9"/>
    </location>
</feature>
<feature type="unsure residue" description="L or I" evidence="2">
    <location>
        <position position="12"/>
    </location>
</feature>
<feature type="unsure residue" description="L or I" evidence="2">
    <location>
        <position position="13"/>
    </location>
</feature>
<proteinExistence type="evidence at protein level"/>
<protein>
    <recommendedName>
        <fullName evidence="3">Temporin-AV</fullName>
    </recommendedName>
</protein>
<dbReference type="GO" id="GO:0005576">
    <property type="term" value="C:extracellular region"/>
    <property type="evidence" value="ECO:0000314"/>
    <property type="project" value="UniProtKB"/>
</dbReference>
<dbReference type="GO" id="GO:0042742">
    <property type="term" value="P:defense response to bacterium"/>
    <property type="evidence" value="ECO:0007669"/>
    <property type="project" value="UniProtKB-KW"/>
</dbReference>
<organism evidence="3">
    <name type="scientific">Rana arvalis</name>
    <name type="common">Moor frog</name>
    <dbReference type="NCBI Taxonomy" id="156871"/>
    <lineage>
        <taxon>Eukaryota</taxon>
        <taxon>Metazoa</taxon>
        <taxon>Chordata</taxon>
        <taxon>Craniata</taxon>
        <taxon>Vertebrata</taxon>
        <taxon>Euteleostomi</taxon>
        <taxon>Amphibia</taxon>
        <taxon>Batrachia</taxon>
        <taxon>Anura</taxon>
        <taxon>Neobatrachia</taxon>
        <taxon>Ranoidea</taxon>
        <taxon>Ranidae</taxon>
        <taxon>Rana</taxon>
        <taxon>Rana</taxon>
    </lineage>
</organism>
<reference evidence="4" key="1">
    <citation type="journal article" date="2022" name="J. Am. Soc. Mass Spectrom.">
        <title>Mass Spectrometry Differentiation between Rana arvalis Populations Based on Their Skin Peptidome Composition.</title>
        <authorList>
            <person name="Samgina T.Y."/>
            <person name="Vasileva I.D."/>
            <person name="Trebse P."/>
            <person name="Torkar G."/>
            <person name="Surin A.K."/>
            <person name="Meng Z."/>
            <person name="Zubarev R.A."/>
            <person name="Lebedev A.T."/>
        </authorList>
    </citation>
    <scope>PROTEIN SEQUENCE</scope>
    <scope>IDENTIFICATION BY MASS SPECTROMETRY</scope>
    <scope>SUBCELLULAR LOCATION</scope>
    <scope>TISSUE SPECIFICITY</scope>
    <scope>AMIDATION AT LEU-13</scope>
    <source>
        <tissue evidence="3">Skin secretion</tissue>
    </source>
</reference>
<comment type="function">
    <text evidence="1">Antimicrobial peptide.</text>
</comment>
<comment type="subcellular location">
    <subcellularLocation>
        <location evidence="2">Secreted</location>
    </subcellularLocation>
</comment>
<comment type="tissue specificity">
    <text evidence="2">Expressed by the skin glands.</text>
</comment>
<comment type="mass spectrometry" mass="1404.87" method="Electrospray" evidence="2"/>
<comment type="similarity">
    <text evidence="4">Belongs to the frog skin active peptide (FSAP) family. Temporin subfamily.</text>
</comment>
<keyword id="KW-0027">Amidation</keyword>
<keyword id="KW-0878">Amphibian defense peptide</keyword>
<keyword id="KW-0044">Antibiotic</keyword>
<keyword id="KW-0929">Antimicrobial</keyword>
<keyword id="KW-0903">Direct protein sequencing</keyword>
<keyword id="KW-0964">Secreted</keyword>
<name>TPAV_RANAR</name>
<evidence type="ECO:0000250" key="1">
    <source>
        <dbReference type="UniProtKB" id="P83307"/>
    </source>
</evidence>
<evidence type="ECO:0000269" key="2">
    <source>
    </source>
</evidence>
<evidence type="ECO:0000303" key="3">
    <source>
    </source>
</evidence>
<evidence type="ECO:0000305" key="4"/>
<accession>C0HM58</accession>